<protein>
    <recommendedName>
        <fullName>Cyclic nucleotide-gated channel beta-1</fullName>
        <shortName>CNG channel beta-1</shortName>
    </recommendedName>
    <alternativeName>
        <fullName>240 kDa protein of rod photoreceptor CNG-channel</fullName>
    </alternativeName>
    <alternativeName>
        <fullName>Cyclic nucleotide-gated cation channel 4</fullName>
        <shortName>CNG channel 4</shortName>
        <shortName>CNG-4</shortName>
        <shortName evidence="9">CNG4</shortName>
    </alternativeName>
    <alternativeName>
        <fullName>Cyclic nucleotide-gated cation channel gamma</fullName>
    </alternativeName>
    <alternativeName>
        <fullName>Cyclic nucleotide-gated cation channel modulatory subunit</fullName>
    </alternativeName>
    <alternativeName>
        <fullName>Glutamic acid-rich protein</fullName>
        <shortName>GARP</shortName>
    </alternativeName>
</protein>
<keyword id="KW-0002">3D-structure</keyword>
<keyword id="KW-0025">Alternative splicing</keyword>
<keyword id="KW-0106">Calcium</keyword>
<keyword id="KW-0107">Calcium channel</keyword>
<keyword id="KW-0109">Calcium transport</keyword>
<keyword id="KW-0114">cAMP</keyword>
<keyword id="KW-0116">cAMP-binding</keyword>
<keyword id="KW-0140">cGMP</keyword>
<keyword id="KW-0142">cGMP-binding</keyword>
<keyword id="KW-0903">Direct protein sequencing</keyword>
<keyword id="KW-0407">Ion channel</keyword>
<keyword id="KW-0406">Ion transport</keyword>
<keyword id="KW-1071">Ligand-gated ion channel</keyword>
<keyword id="KW-0472">Membrane</keyword>
<keyword id="KW-0547">Nucleotide-binding</keyword>
<keyword id="KW-0552">Olfaction</keyword>
<keyword id="KW-1185">Reference proteome</keyword>
<keyword id="KW-0716">Sensory transduction</keyword>
<keyword id="KW-0915">Sodium</keyword>
<keyword id="KW-0894">Sodium channel</keyword>
<keyword id="KW-0739">Sodium transport</keyword>
<keyword id="KW-0812">Transmembrane</keyword>
<keyword id="KW-1133">Transmembrane helix</keyword>
<keyword id="KW-0813">Transport</keyword>
<keyword id="KW-0844">Vision</keyword>
<name>CNGB1_BOVIN</name>
<reference key="1">
    <citation type="journal article" date="1995" name="Neuron">
        <title>A 240 kDa protein represents the complete beta subunit of the cyclic nucleotide-gated channel from rod photoreceptor.</title>
        <authorList>
            <person name="Koerschen H.G."/>
            <person name="Illing M."/>
            <person name="Seifert R."/>
            <person name="Sesti F."/>
            <person name="Williams A."/>
            <person name="Gotzes S."/>
            <person name="Colville C."/>
            <person name="Mueller F."/>
            <person name="Dose A."/>
            <person name="Godde M."/>
            <person name="Molday L."/>
            <person name="Kaupp U.B."/>
            <person name="Molday R.S."/>
        </authorList>
    </citation>
    <scope>NUCLEOTIDE SEQUENCE [MRNA] (ISOFORM CNG4A)</scope>
    <scope>PARTIAL PROTEIN SEQUENCE</scope>
</reference>
<reference key="2">
    <citation type="journal article" date="1996" name="J. Biol. Chem.">
        <title>Molecular cloning and expression of the modulatory subunit of the cyclic nucleotide-gated cation channel.</title>
        <authorList>
            <person name="Biel M."/>
            <person name="Zong X."/>
            <person name="Ludwig A."/>
            <person name="Sautter A."/>
            <person name="Hofmann F."/>
        </authorList>
    </citation>
    <scope>NUCLEOTIDE SEQUENCE [MRNA] (ISOFORM CNG4C)</scope>
    <scope>ALTERNATIVE SPLICING (ISOFORMS CNG4D AND CNG4E)</scope>
    <source>
        <tissue>Testis</tissue>
    </source>
</reference>
<reference key="3">
    <citation type="journal article" date="1991" name="Proc. Natl. Acad. Sci. U.S.A.">
        <title>The amino acid sequence of a glutamic acid-rich protein from bovine retina as deduced from the cDNA sequence.</title>
        <authorList>
            <person name="Sugimoto Y."/>
            <person name="Yatsunami K."/>
            <person name="Tsujimoto M."/>
            <person name="Khorana H.G."/>
            <person name="Ichikawa A."/>
        </authorList>
    </citation>
    <scope>NUCLEOTIDE SEQUENCE [MRNA] (ISOFORM GARP1)</scope>
    <source>
        <tissue>Retina</tissue>
    </source>
</reference>
<reference key="4">
    <citation type="unpublished observations" date="2009-05">
        <authorList>
            <person name="Cote R.H."/>
        </authorList>
    </citation>
    <scope>ALTERNATIVE SPLICING (ISOFORMS GARP1 AND GARP2)</scope>
</reference>
<reference key="5">
    <citation type="journal article" date="1999" name="J. Gen. Physiol.">
        <title>Divalent cation selectivity is a function of gating in native and recombinant cyclic nucleotide-gated ion channels from retinal photoreceptors.</title>
        <authorList>
            <person name="Hackos D.H."/>
            <person name="Korenbrot J.I."/>
        </authorList>
    </citation>
    <scope>FUNCTION</scope>
    <scope>TRANSPORTER ACTIVITY</scope>
</reference>
<reference key="6">
    <citation type="journal article" date="2001" name="Science">
        <title>Nomenclature for ion channel subunits.</title>
        <authorList>
            <person name="Bradley J."/>
            <person name="Frings S."/>
            <person name="Yau K.W."/>
            <person name="Reed R."/>
        </authorList>
    </citation>
    <scope>NOMENCLATURE</scope>
</reference>
<reference key="7">
    <citation type="journal article" date="2011" name="Nat. Commun.">
        <title>Molecular mechanism for 3:1 subunit stoichiometry of rod cyclic nucleotide-gated ion channels.</title>
        <authorList>
            <person name="Shuart N.G."/>
            <person name="Haitin Y."/>
            <person name="Camp S.S."/>
            <person name="Black K.D."/>
            <person name="Zagotta W.N."/>
        </authorList>
    </citation>
    <scope>FUNCTION</scope>
    <scope>SUBUNIT</scope>
</reference>
<reference key="8">
    <citation type="journal article" date="2022" name="Nat. Struct. Mol. Biol.">
        <title>The structure of the native CNGA1/CNGB1 CNG channel from bovine retinal rods.</title>
        <authorList>
            <person name="Barret D.C.A."/>
            <person name="Schertler G.F.X."/>
            <person name="Kaupp U.B."/>
            <person name="Marino J."/>
        </authorList>
    </citation>
    <scope>STRUCTURE BY ELECTRON MICROSCOPY (3.40 ANGSTROMS)</scope>
    <scope>FUNCTION</scope>
    <scope>SUBUNIT</scope>
    <scope>DOMAIN</scope>
    <scope>SITE</scope>
</reference>
<reference key="9">
    <citation type="journal article" date="2023" name="Proc. Natl. Acad. Sci. U.S.A.">
        <title>Structural basis of calmodulin modulation of the rod cyclic nucleotide-gated channel.</title>
        <authorList>
            <person name="Barret D.C.A."/>
            <person name="Schuster D."/>
            <person name="Rodrigues M.J."/>
            <person name="Leitner A."/>
            <person name="Picotti P."/>
            <person name="Schertler G.F.X."/>
            <person name="Kaupp U.B."/>
            <person name="Korkhov V.M."/>
            <person name="Marino J."/>
        </authorList>
    </citation>
    <scope>STRUCTURE BY ELECTRON MICROSCOPY (2.76 ANGSTROMS)</scope>
    <scope>FUNCTION</scope>
    <scope>SUBUNIT</scope>
    <scope>DOMAIN</scope>
    <scope>TOPOLOGY</scope>
</reference>
<sequence>MLGWVQRVLPQPPGTPQKTKQEEEGTEPEPELEPKPETAPEETELEEVSLPPEEPCVGKEVAAVTLGPQGTQETALTPPTSLQAQVSVAPEAHSSPRGWVLTWLRKGVEKVVPQPAHSSRPSQNIAAGLESPDQQAGAQILGQCGTGGSDEPSEPSRAEDPGPGPWLLRWFEQNLEKMLPQPPKISEGWRDEPTDAALGPEPPGPALEIKPMLQAQESPSLPAPGPPEPEEEPIPEPQPTIQASSLPPPQDSARLMAWILHRLEMALPQPVIRGKGGEQESDAPVTCDVQTISILPGEQEESHLILEEVDPHWEEDEHQEGSTSTSPRTSEAAPADEEKGKVVEQTPRELPRIQEEKEDEEEEKEDGEEEEEEGREKEEEEGEEKEEEEGREKEEEEGEKKEEEGREKEEEEGGEKEDEEGREKEEEEGRGKEEEEGGEKEEEEGRGKEEVEGREEEEDEEEEQDHSVLLDSYLVPQSEEDRSEESETQDQSEVGGAQAQGEVGGAQALSEESETQDQSEVGGAQDQSEVGGAQAQGEVGGAQEQDGVGGAQDQSTSHQELQEEALADSSGVPATEEHPELQVEDADADSRPLIAEENPPSPVQLPLSPAKSDTLAVPGSATGSLRKRLPSQDDEAEELKMLSPAASPVVAWSDPTSPQGTDDQDRATSTASQNSAIINDRLQELVKLFKERTEKVKEKLIDPDVTSDEESPKPSPAKKAPEPAPEVKPAEAGQVEEEHYCEMLCCKFKRRPWKKYQFPQSIDPLTNLMYILWLFFVVLAWNWNCWLIPVRWAFPYQTPDNIHLWLLMDYLCDLIYLLDITVFQMRLQFVRGGDIITDKKEMRNNYVKSQRFKMDMLCLLPLDLLYLKFGVNPLLRLPRCLKYMAFFEFNNRLESILSKAYVYRVIRTTAYLLYSLHLNSCLYYWASAYEGLGSTHWVYDGVGNSYIRCYYWAVKTLITIGGLPDPRTLFEIVFQGLNYFTGVFAFSVMIGQMRDVVGAATAGQTYYRSCMDSTVKYMNFYKIPRSVQNRVKTWYEYTWHSQGMLDESELMVQLPDKMRLDLAIDVNYSIVSKVALFQGCDRQMIFDMLKRLRSVVYLPNDYVCKKGEIGREMYIIQAGQVQVLGGPDGKSVLVTLKAGSVFGEISLLAVGGGNRRTANVVAHGFTNLFILDKKDLNEILVHYPESQKLLRKKARRMLRNNNKPKEKSVLILPPRAGTPKLFNAALAAAGKMGAKGGRGGRLALLRARLKELAALEAAARQQQLLEQAKSSEDAAVGEEGSASPEQPPRPEPPAPEAPAPEPTAPEPLAPEAPAPEAPAPSSPPPASQERPEGDKDAARPEEHPVRIHVTLGPDPSEQILLVEVPEKQEEKEKKEEETEEKEEGEEARKEKEEE</sequence>
<dbReference type="EMBL" id="X89626">
    <property type="protein sequence ID" value="CAA61769.1"/>
    <property type="molecule type" value="mRNA"/>
</dbReference>
<dbReference type="EMBL" id="X94707">
    <property type="protein sequence ID" value="CAA64367.1"/>
    <property type="molecule type" value="mRNA"/>
</dbReference>
<dbReference type="EMBL" id="M61185">
    <property type="protein sequence ID" value="AAA30536.1"/>
    <property type="molecule type" value="mRNA"/>
</dbReference>
<dbReference type="PIR" id="A40437">
    <property type="entry name" value="A40437"/>
</dbReference>
<dbReference type="RefSeq" id="NP_001129112.1">
    <molecule id="Q28181-4"/>
    <property type="nucleotide sequence ID" value="NM_001135640.1"/>
</dbReference>
<dbReference type="RefSeq" id="NP_001129113.1">
    <molecule id="Q28181-5"/>
    <property type="nucleotide sequence ID" value="NM_001135641.1"/>
</dbReference>
<dbReference type="RefSeq" id="NP_851362.1">
    <molecule id="Q28181-6"/>
    <property type="nucleotide sequence ID" value="NM_181019.2"/>
</dbReference>
<dbReference type="PDB" id="7O4H">
    <property type="method" value="EM"/>
    <property type="resolution" value="3.40 A"/>
    <property type="chains" value="D=1-1394"/>
</dbReference>
<dbReference type="PDB" id="8BX7">
    <property type="method" value="EM"/>
    <property type="resolution" value="2.76 A"/>
    <property type="chains" value="D=1-1394"/>
</dbReference>
<dbReference type="PDBsum" id="7O4H"/>
<dbReference type="PDBsum" id="8BX7"/>
<dbReference type="EMDB" id="EMD-12718"/>
<dbReference type="EMDB" id="EMD-16311"/>
<dbReference type="SMR" id="Q28181"/>
<dbReference type="DIP" id="DIP-47448N"/>
<dbReference type="FunCoup" id="Q28181">
    <property type="interactions" value="246"/>
</dbReference>
<dbReference type="IntAct" id="Q28181">
    <property type="interactions" value="9"/>
</dbReference>
<dbReference type="MINT" id="Q28181"/>
<dbReference type="STRING" id="9913.ENSBTAP00000032365"/>
<dbReference type="PaxDb" id="9913-ENSBTAP00000032365"/>
<dbReference type="GeneID" id="281702"/>
<dbReference type="KEGG" id="bta:281702"/>
<dbReference type="CTD" id="1258"/>
<dbReference type="eggNOG" id="KOG0499">
    <property type="taxonomic scope" value="Eukaryota"/>
</dbReference>
<dbReference type="eggNOG" id="KOG1808">
    <property type="taxonomic scope" value="Eukaryota"/>
</dbReference>
<dbReference type="InParanoid" id="Q28181"/>
<dbReference type="OrthoDB" id="421226at2759"/>
<dbReference type="Proteomes" id="UP000009136">
    <property type="component" value="Unplaced"/>
</dbReference>
<dbReference type="GO" id="GO:0005737">
    <property type="term" value="C:cytoplasm"/>
    <property type="evidence" value="ECO:0000314"/>
    <property type="project" value="UniProtKB"/>
</dbReference>
<dbReference type="GO" id="GO:0017071">
    <property type="term" value="C:intracellular cyclic nucleotide activated cation channel complex"/>
    <property type="evidence" value="ECO:0000318"/>
    <property type="project" value="GO_Central"/>
</dbReference>
<dbReference type="GO" id="GO:0098804">
    <property type="term" value="C:non-motile cilium membrane"/>
    <property type="evidence" value="ECO:0000250"/>
    <property type="project" value="UniProtKB"/>
</dbReference>
<dbReference type="GO" id="GO:0001750">
    <property type="term" value="C:photoreceptor outer segment"/>
    <property type="evidence" value="ECO:0000318"/>
    <property type="project" value="GO_Central"/>
</dbReference>
<dbReference type="GO" id="GO:0042622">
    <property type="term" value="C:photoreceptor outer segment membrane"/>
    <property type="evidence" value="ECO:0000314"/>
    <property type="project" value="CAFA"/>
</dbReference>
<dbReference type="GO" id="GO:0005886">
    <property type="term" value="C:plasma membrane"/>
    <property type="evidence" value="ECO:0000318"/>
    <property type="project" value="GO_Central"/>
</dbReference>
<dbReference type="GO" id="GO:0032991">
    <property type="term" value="C:protein-containing complex"/>
    <property type="evidence" value="ECO:0000314"/>
    <property type="project" value="UniProtKB"/>
</dbReference>
<dbReference type="GO" id="GO:0120200">
    <property type="term" value="C:rod photoreceptor outer segment"/>
    <property type="evidence" value="ECO:0000250"/>
    <property type="project" value="UniProtKB"/>
</dbReference>
<dbReference type="GO" id="GO:0005262">
    <property type="term" value="F:calcium channel activity"/>
    <property type="evidence" value="ECO:0007669"/>
    <property type="project" value="UniProtKB-KW"/>
</dbReference>
<dbReference type="GO" id="GO:0030552">
    <property type="term" value="F:cAMP binding"/>
    <property type="evidence" value="ECO:0000250"/>
    <property type="project" value="UniProtKB"/>
</dbReference>
<dbReference type="GO" id="GO:0030553">
    <property type="term" value="F:cGMP binding"/>
    <property type="evidence" value="ECO:0000250"/>
    <property type="project" value="UniProtKB"/>
</dbReference>
<dbReference type="GO" id="GO:0042802">
    <property type="term" value="F:identical protein binding"/>
    <property type="evidence" value="ECO:0000353"/>
    <property type="project" value="IntAct"/>
</dbReference>
<dbReference type="GO" id="GO:0005222">
    <property type="term" value="F:intracellularly cAMP-activated cation channel activity"/>
    <property type="evidence" value="ECO:0000250"/>
    <property type="project" value="UniProtKB"/>
</dbReference>
<dbReference type="GO" id="GO:0005223">
    <property type="term" value="F:intracellularly cGMP-activated cation channel activity"/>
    <property type="evidence" value="ECO:0000314"/>
    <property type="project" value="UniProtKB"/>
</dbReference>
<dbReference type="GO" id="GO:0060090">
    <property type="term" value="F:molecular adaptor activity"/>
    <property type="evidence" value="ECO:0000269"/>
    <property type="project" value="DisProt"/>
</dbReference>
<dbReference type="GO" id="GO:0140313">
    <property type="term" value="F:molecular sequestering activity"/>
    <property type="evidence" value="ECO:0000269"/>
    <property type="project" value="DisProt"/>
</dbReference>
<dbReference type="GO" id="GO:0042803">
    <property type="term" value="F:protein homodimerization activity"/>
    <property type="evidence" value="ECO:0000314"/>
    <property type="project" value="CAFA"/>
</dbReference>
<dbReference type="GO" id="GO:0044877">
    <property type="term" value="F:protein-containing complex binding"/>
    <property type="evidence" value="ECO:0000318"/>
    <property type="project" value="GO_Central"/>
</dbReference>
<dbReference type="GO" id="GO:0005272">
    <property type="term" value="F:sodium channel activity"/>
    <property type="evidence" value="ECO:0007669"/>
    <property type="project" value="UniProtKB-KW"/>
</dbReference>
<dbReference type="GO" id="GO:0006816">
    <property type="term" value="P:calcium ion transport"/>
    <property type="evidence" value="ECO:0000314"/>
    <property type="project" value="UniProtKB"/>
</dbReference>
<dbReference type="GO" id="GO:0098655">
    <property type="term" value="P:monoatomic cation transmembrane transport"/>
    <property type="evidence" value="ECO:0000318"/>
    <property type="project" value="GO_Central"/>
</dbReference>
<dbReference type="GO" id="GO:0010628">
    <property type="term" value="P:positive regulation of gene expression"/>
    <property type="evidence" value="ECO:0000314"/>
    <property type="project" value="UniProtKB"/>
</dbReference>
<dbReference type="GO" id="GO:0006813">
    <property type="term" value="P:potassium ion transport"/>
    <property type="evidence" value="ECO:0000250"/>
    <property type="project" value="UniProtKB"/>
</dbReference>
<dbReference type="GO" id="GO:0001895">
    <property type="term" value="P:retina homeostasis"/>
    <property type="evidence" value="ECO:0000318"/>
    <property type="project" value="GO_Central"/>
</dbReference>
<dbReference type="GO" id="GO:0007608">
    <property type="term" value="P:sensory perception of smell"/>
    <property type="evidence" value="ECO:0000250"/>
    <property type="project" value="UniProtKB"/>
</dbReference>
<dbReference type="GO" id="GO:0006814">
    <property type="term" value="P:sodium ion transport"/>
    <property type="evidence" value="ECO:0000314"/>
    <property type="project" value="UniProtKB"/>
</dbReference>
<dbReference type="GO" id="GO:0007601">
    <property type="term" value="P:visual perception"/>
    <property type="evidence" value="ECO:0000250"/>
    <property type="project" value="UniProtKB"/>
</dbReference>
<dbReference type="CDD" id="cd00038">
    <property type="entry name" value="CAP_ED"/>
    <property type="match status" value="1"/>
</dbReference>
<dbReference type="DisProt" id="DP00768">
    <molecule id="Q28181-4"/>
</dbReference>
<dbReference type="FunFam" id="1.10.287.70:FF:000072">
    <property type="entry name" value="Cyclic nucleotide gated channel beta 3"/>
    <property type="match status" value="1"/>
</dbReference>
<dbReference type="FunFam" id="1.10.287.630:FF:000001">
    <property type="entry name" value="Cyclic nucleotide-gated channel alpha 3"/>
    <property type="match status" value="1"/>
</dbReference>
<dbReference type="FunFam" id="2.60.120.10:FF:000020">
    <property type="entry name" value="Cyclic nucleotide-gated channel beta 3"/>
    <property type="match status" value="1"/>
</dbReference>
<dbReference type="Gene3D" id="1.10.287.70">
    <property type="match status" value="1"/>
</dbReference>
<dbReference type="Gene3D" id="1.10.287.630">
    <property type="entry name" value="Helix hairpin bin"/>
    <property type="match status" value="1"/>
</dbReference>
<dbReference type="Gene3D" id="2.60.120.10">
    <property type="entry name" value="Jelly Rolls"/>
    <property type="match status" value="1"/>
</dbReference>
<dbReference type="InterPro" id="IPR050866">
    <property type="entry name" value="CNG_cation_channel"/>
</dbReference>
<dbReference type="InterPro" id="IPR018488">
    <property type="entry name" value="cNMP-bd_CS"/>
</dbReference>
<dbReference type="InterPro" id="IPR000595">
    <property type="entry name" value="cNMP-bd_dom"/>
</dbReference>
<dbReference type="InterPro" id="IPR018490">
    <property type="entry name" value="cNMP-bd_dom_sf"/>
</dbReference>
<dbReference type="InterPro" id="IPR005821">
    <property type="entry name" value="Ion_trans_dom"/>
</dbReference>
<dbReference type="InterPro" id="IPR014710">
    <property type="entry name" value="RmlC-like_jellyroll"/>
</dbReference>
<dbReference type="PANTHER" id="PTHR45638:SF16">
    <property type="entry name" value="CYCLIC NUCLEOTIDE-GATED CATION CHANNEL BETA-1"/>
    <property type="match status" value="1"/>
</dbReference>
<dbReference type="PANTHER" id="PTHR45638">
    <property type="entry name" value="CYCLIC NUCLEOTIDE-GATED CATION CHANNEL SUBUNIT A"/>
    <property type="match status" value="1"/>
</dbReference>
<dbReference type="Pfam" id="PF00027">
    <property type="entry name" value="cNMP_binding"/>
    <property type="match status" value="1"/>
</dbReference>
<dbReference type="Pfam" id="PF00520">
    <property type="entry name" value="Ion_trans"/>
    <property type="match status" value="1"/>
</dbReference>
<dbReference type="SMART" id="SM00100">
    <property type="entry name" value="cNMP"/>
    <property type="match status" value="1"/>
</dbReference>
<dbReference type="SUPFAM" id="SSF51206">
    <property type="entry name" value="cAMP-binding domain-like"/>
    <property type="match status" value="1"/>
</dbReference>
<dbReference type="SUPFAM" id="SSF81324">
    <property type="entry name" value="Voltage-gated potassium channels"/>
    <property type="match status" value="1"/>
</dbReference>
<dbReference type="PROSITE" id="PS00888">
    <property type="entry name" value="CNMP_BINDING_1"/>
    <property type="match status" value="1"/>
</dbReference>
<dbReference type="PROSITE" id="PS00889">
    <property type="entry name" value="CNMP_BINDING_2"/>
    <property type="match status" value="1"/>
</dbReference>
<dbReference type="PROSITE" id="PS50042">
    <property type="entry name" value="CNMP_BINDING_3"/>
    <property type="match status" value="1"/>
</dbReference>
<proteinExistence type="evidence at protein level"/>
<comment type="function">
    <text evidence="1 3 5 6 7 8">Pore-forming subunit of the rod cyclic nucleotide-gated channel. Mediates rod photoresponses at dim light converting transient changes in intracellular cGMP levels into electrical signals. In the dark, cGMP levels are high and keep the channel open enabling a steady inward current carried by Na(+) and Ca(2+) ions that leads to membrane depolarization and neurotransmitter release from synaptic terminals. Upon photon absorption cGMP levels decline leading to channel closure and membrane hyperpolarization that ultimately slows neurotransmitter release and signals the presence of light, the end point of the phototransduction cascade (PubMed:10352032, PubMed:21878911, PubMed:34969975, PubMed:37011209). Pore-forming subunit of the olfactory cyclic nucleotide-gated channel. Operates in the cilia of olfactory sensory neurons where chemical stimulation of the odorant is converted to an electrical signal. Mediates odorant-induced cAMP-dependent Ca(2+) influx triggering neuron depolarization. The rise of intracellular Ca(2+) levels potentiates the olfactory response by activating Ca(2+)-dependent Cl(-) channels, but it also serves as a negative feedback signal to desensitize the channel for rapid adaptation to odorants (By similarity). Conducts cGMP- and cAMP-gated ion currents, with permeability for monovalent and divalent cations. The selectivity for Ca(2+) over Na(+) increases with cGMP concentrations, whereas the selectivity among monovalent ions is independent of the cGMP levels (By similarity) (PubMed:10352032).</text>
</comment>
<comment type="catalytic activity">
    <reaction evidence="5">
        <text>Ca(2+)(in) = Ca(2+)(out)</text>
        <dbReference type="Rhea" id="RHEA:29671"/>
        <dbReference type="ChEBI" id="CHEBI:29108"/>
    </reaction>
</comment>
<comment type="catalytic activity">
    <reaction evidence="5">
        <text>Na(+)(in) = Na(+)(out)</text>
        <dbReference type="Rhea" id="RHEA:34963"/>
        <dbReference type="ChEBI" id="CHEBI:29101"/>
    </reaction>
</comment>
<comment type="catalytic activity">
    <reaction evidence="3">
        <text>K(+)(in) = K(+)(out)</text>
        <dbReference type="Rhea" id="RHEA:29463"/>
        <dbReference type="ChEBI" id="CHEBI:29103"/>
    </reaction>
</comment>
<comment type="catalytic activity">
    <reaction evidence="5">
        <text>NH4(+)(in) = NH4(+)(out)</text>
        <dbReference type="Rhea" id="RHEA:28747"/>
        <dbReference type="ChEBI" id="CHEBI:28938"/>
    </reaction>
</comment>
<comment type="catalytic activity">
    <reaction evidence="3">
        <text>Rb(+)(in) = Rb(+)(out)</text>
        <dbReference type="Rhea" id="RHEA:78547"/>
        <dbReference type="ChEBI" id="CHEBI:49847"/>
    </reaction>
</comment>
<comment type="catalytic activity">
    <reaction evidence="3">
        <text>Li(+)(in) = Li(+)(out)</text>
        <dbReference type="Rhea" id="RHEA:78551"/>
        <dbReference type="ChEBI" id="CHEBI:49713"/>
    </reaction>
</comment>
<comment type="catalytic activity">
    <reaction evidence="5">
        <text>Cs(+)(in) = Cs(+)(out)</text>
        <dbReference type="Rhea" id="RHEA:78555"/>
        <dbReference type="ChEBI" id="CHEBI:49547"/>
    </reaction>
</comment>
<comment type="subunit">
    <text evidence="1 6 7 8">The rod cyclic nucleotide-gated channel is a heterotetramer composed of CNGA1 and CNGB1 subunits with 3:1 stoichiometry. CNGA1:CNGB1 channel binds Ca(2+)-bound CALM1 via CaM1 and CaM2 regions of the CNGB1 subunit; this interaction modulates the affinity of the channel for cNMPs in response to intracellular Ca(2+) levels (PubMed:21878911, PubMed:34969975, PubMed:37011209). The olfactory cyclic nucleotide-gated channel is a heterotetramer composed of CNGA2, CNGA4 and CNGB1 subunits with 2:1:1 stoichiometry (By similarity).</text>
</comment>
<comment type="interaction">
    <interactant intactId="EBI-6979031">
        <id>Q28181</id>
    </interactant>
    <interactant intactId="EBI-7079806">
        <id>F1MWM0</id>
        <label>ABCA4</label>
    </interactant>
    <organismsDiffer>false</organismsDiffer>
    <experiments>3</experiments>
</comment>
<comment type="interaction">
    <interactant intactId="EBI-6979031">
        <id>Q28181</id>
    </interactant>
    <interactant intactId="EBI-6979031">
        <id>Q28181</id>
        <label>CNGB1</label>
    </interactant>
    <organismsDiffer>false</organismsDiffer>
    <experiments>12</experiments>
</comment>
<comment type="interaction">
    <interactant intactId="EBI-6979031">
        <id>Q28181</id>
    </interactant>
    <interactant intactId="EBI-7052221">
        <id>P04695</id>
        <label>GNAT1</label>
    </interactant>
    <organismsDiffer>false</organismsDiffer>
    <experiments>4</experiments>
</comment>
<comment type="interaction">
    <interactant intactId="EBI-6979031">
        <id>Q28181</id>
    </interactant>
    <interactant intactId="EBI-6943076">
        <id>P55203</id>
        <label>GUCY2D</label>
    </interactant>
    <organismsDiffer>false</organismsDiffer>
    <experiments>5</experiments>
</comment>
<comment type="interaction">
    <interactant intactId="EBI-6979031">
        <id>Q28181</id>
    </interactant>
    <interactant intactId="EBI-7079707">
        <id>Q32LM8</id>
        <label>NRM</label>
    </interactant>
    <organismsDiffer>false</organismsDiffer>
    <experiments>4</experiments>
</comment>
<comment type="subcellular location">
    <subcellularLocation>
        <location>Membrane</location>
        <topology>Multi-pass membrane protein</topology>
    </subcellularLocation>
</comment>
<comment type="alternative products">
    <event type="alternative splicing"/>
    <isoform>
        <id>Q28181-6</id>
        <name>CNG4A</name>
        <sequence type="displayed"/>
    </isoform>
    <isoform>
        <id>Q28181-1</id>
        <name>CNG4C</name>
        <sequence type="described" ref="VSP_037919 VSP_037920 VSP_037913"/>
    </isoform>
    <isoform>
        <id>Q28181-2</id>
        <name>CNG4D</name>
        <sequence type="described" ref="VSP_037919 VSP_037920 VSP_037916"/>
    </isoform>
    <isoform>
        <id>Q28181-3</id>
        <name>CNG4E</name>
        <sequence type="described" ref="VSP_037919 VSP_037920 VSP_037915"/>
    </isoform>
    <isoform>
        <id>Q28181-4</id>
        <name>GARP1</name>
        <sequence type="described" ref="VSP_037912 VSP_037913 VSP_037914 VSP_037917 VSP_037918"/>
    </isoform>
    <isoform>
        <id>Q28181-5</id>
        <name>GARP2</name>
        <sequence type="described" ref="VSP_037910 VSP_037911"/>
    </isoform>
    <text>Isoform CNG4D is the most frequent isoform (CNG4D:CNG4C:CNG4E = 20:2:1) in testis.</text>
</comment>
<comment type="tissue specificity">
    <text>Retina, testis, kidney, heart and brain.</text>
</comment>
<comment type="domain">
    <text evidence="7 8">The cyclic nucleotide-binding domain (CNBD) comprises three helices and a beta-roll of eight beta-strands from CNGA1 and CNGB1 subunits. Upon cNMP binding transmits the conformational changes to the C-linker domain of the S6 helix to open the ion conduction pathway.</text>
</comment>
<comment type="domain">
    <text evidence="7 8">The ion conduction pathway consists of S5, S6 and pore helices from CNGA1 and CNGB1 subunits. It contains a central hydrophobic gate that opens upon cNMP binding. CNGB1 displays an additional charged arginine gate below the central gate to regulate ion permeation.</text>
</comment>
<comment type="miscellaneous">
    <molecule>Isoform GARP1</molecule>
    <text evidence="13">In the rod cells, the Cngb1 locus encodes the cyclic nucleotide-gated cation channel beta-1 subunit and several glutamic-acid-rich proteins (GARPs).</text>
</comment>
<comment type="miscellaneous">
    <molecule>Isoform GARP2</molecule>
    <text evidence="13">In the rod cells, the Cngb1 locus encodes the cyclic nucleotide-gated cation channel beta-1 subunit and several glutamic-acid-rich proteins (GARPs).</text>
</comment>
<comment type="similarity">
    <text evidence="13">Belongs to the cyclic nucleotide-gated cation channel (TC 1.A.1.5) family. CNGB1 subfamily.</text>
</comment>
<evidence type="ECO:0000250" key="1">
    <source>
        <dbReference type="UniProtKB" id="A0A8I5ZN27"/>
    </source>
</evidence>
<evidence type="ECO:0000250" key="2">
    <source>
        <dbReference type="UniProtKB" id="Q14028"/>
    </source>
</evidence>
<evidence type="ECO:0000250" key="3">
    <source>
        <dbReference type="UniProtKB" id="Q9NQW8"/>
    </source>
</evidence>
<evidence type="ECO:0000256" key="4">
    <source>
        <dbReference type="SAM" id="MobiDB-lite"/>
    </source>
</evidence>
<evidence type="ECO:0000269" key="5">
    <source>
    </source>
</evidence>
<evidence type="ECO:0000269" key="6">
    <source>
    </source>
</evidence>
<evidence type="ECO:0000269" key="7">
    <source>
    </source>
</evidence>
<evidence type="ECO:0000269" key="8">
    <source>
    </source>
</evidence>
<evidence type="ECO:0000303" key="9">
    <source>
    </source>
</evidence>
<evidence type="ECO:0000303" key="10">
    <source>
    </source>
</evidence>
<evidence type="ECO:0000303" key="11">
    <source>
    </source>
</evidence>
<evidence type="ECO:0000303" key="12">
    <source>
    </source>
</evidence>
<evidence type="ECO:0000305" key="13"/>
<evidence type="ECO:0000305" key="14">
    <source>
    </source>
</evidence>
<evidence type="ECO:0007744" key="15">
    <source>
        <dbReference type="PDB" id="8BX7"/>
    </source>
</evidence>
<evidence type="ECO:0007829" key="16">
    <source>
        <dbReference type="PDB" id="7O4H"/>
    </source>
</evidence>
<evidence type="ECO:0007829" key="17">
    <source>
        <dbReference type="PDB" id="8BX7"/>
    </source>
</evidence>
<feature type="chain" id="PRO_0000005555" description="Cyclic nucleotide-gated channel beta-1">
    <location>
        <begin position="1"/>
        <end position="1394"/>
    </location>
</feature>
<feature type="topological domain" description="Cytoplasmic" evidence="13">
    <location>
        <begin position="1"/>
        <end position="762"/>
    </location>
</feature>
<feature type="transmembrane region" description="Helical; Name=S1" evidence="8 15">
    <location>
        <begin position="763"/>
        <end position="793"/>
    </location>
</feature>
<feature type="topological domain" description="Extracellular" evidence="13">
    <location>
        <begin position="794"/>
        <end position="798"/>
    </location>
</feature>
<feature type="transmembrane region" description="Helical; Name=S2" evidence="8 15">
    <location>
        <begin position="799"/>
        <end position="825"/>
    </location>
</feature>
<feature type="topological domain" description="Cytoplasmic" evidence="13">
    <location>
        <begin position="826"/>
        <end position="837"/>
    </location>
</feature>
<feature type="transmembrane region" description="Helical; Name=S3" evidence="8 15">
    <location>
        <begin position="838"/>
        <end position="861"/>
    </location>
</feature>
<feature type="topological domain" description="Extracellular" evidence="13">
    <location>
        <begin position="862"/>
        <end position="872"/>
    </location>
</feature>
<feature type="transmembrane region" description="Helical; Name=S4" evidence="8 15">
    <location>
        <begin position="873"/>
        <end position="887"/>
    </location>
</feature>
<feature type="topological domain" description="Cytoplasmic" evidence="13">
    <location>
        <begin position="888"/>
        <end position="900"/>
    </location>
</feature>
<feature type="transmembrane region" description="Helical; Name=S5" evidence="8 15">
    <location>
        <begin position="901"/>
        <end position="922"/>
    </location>
</feature>
<feature type="topological domain" description="Extracellular" evidence="13">
    <location>
        <begin position="923"/>
        <end position="931"/>
    </location>
</feature>
<feature type="transmembrane region" description="Helical; Name=P-helix" evidence="8 15">
    <location>
        <begin position="932"/>
        <end position="974"/>
    </location>
</feature>
<feature type="transmembrane region" description="Helical; Name=S6" evidence="8 15">
    <location>
        <begin position="975"/>
        <end position="1002"/>
    </location>
</feature>
<feature type="topological domain" description="Cytoplasmic" evidence="13">
    <location>
        <begin position="1003"/>
        <end position="1394"/>
    </location>
</feature>
<feature type="region of interest" description="Disordered" evidence="4">
    <location>
        <begin position="1"/>
        <end position="95"/>
    </location>
</feature>
<feature type="region of interest" description="Disordered" evidence="4">
    <location>
        <begin position="112"/>
        <end position="253"/>
    </location>
</feature>
<feature type="region of interest" description="Disordered" evidence="4">
    <location>
        <begin position="271"/>
        <end position="675"/>
    </location>
</feature>
<feature type="region of interest" description="Calmodulin-binding CaM1" evidence="8">
    <location>
        <begin position="671"/>
        <end position="681"/>
    </location>
</feature>
<feature type="region of interest" description="Disordered" evidence="4">
    <location>
        <begin position="699"/>
        <end position="732"/>
    </location>
</feature>
<feature type="region of interest" description="Ion conduction pathway" evidence="2 14">
    <location>
        <begin position="900"/>
        <end position="999"/>
    </location>
</feature>
<feature type="region of interest" description="Selectivity filter" evidence="14">
    <location>
        <begin position="959"/>
        <end position="962"/>
    </location>
</feature>
<feature type="region of interest" description="Cyclic nucleotide-binding domain" evidence="14">
    <location>
        <begin position="1082"/>
        <end position="1198"/>
    </location>
</feature>
<feature type="region of interest" description="Calmodulin-binding CaM2" evidence="8">
    <location>
        <begin position="1261"/>
        <end position="1267"/>
    </location>
</feature>
<feature type="region of interest" description="Disordered" evidence="4">
    <location>
        <begin position="1265"/>
        <end position="1394"/>
    </location>
</feature>
<feature type="short sequence motif" description="IQ-like">
    <location>
        <begin position="682"/>
        <end position="692"/>
    </location>
</feature>
<feature type="compositionally biased region" description="Polar residues" evidence="4">
    <location>
        <begin position="68"/>
        <end position="86"/>
    </location>
</feature>
<feature type="compositionally biased region" description="Polar residues" evidence="4">
    <location>
        <begin position="116"/>
        <end position="125"/>
    </location>
</feature>
<feature type="compositionally biased region" description="Basic and acidic residues" evidence="4">
    <location>
        <begin position="300"/>
        <end position="312"/>
    </location>
</feature>
<feature type="compositionally biased region" description="Basic and acidic residues" evidence="4">
    <location>
        <begin position="336"/>
        <end position="355"/>
    </location>
</feature>
<feature type="compositionally biased region" description="Acidic residues" evidence="4">
    <location>
        <begin position="356"/>
        <end position="387"/>
    </location>
</feature>
<feature type="compositionally biased region" description="Basic and acidic residues" evidence="4">
    <location>
        <begin position="388"/>
        <end position="408"/>
    </location>
</feature>
<feature type="compositionally biased region" description="Acidic residues" evidence="4">
    <location>
        <begin position="409"/>
        <end position="418"/>
    </location>
</feature>
<feature type="compositionally biased region" description="Basic and acidic residues" evidence="4">
    <location>
        <begin position="419"/>
        <end position="433"/>
    </location>
</feature>
<feature type="compositionally biased region" description="Acidic residues" evidence="4">
    <location>
        <begin position="452"/>
        <end position="464"/>
    </location>
</feature>
<feature type="compositionally biased region" description="Acidic residues" evidence="4">
    <location>
        <begin position="481"/>
        <end position="490"/>
    </location>
</feature>
<feature type="compositionally biased region" description="Low complexity" evidence="4">
    <location>
        <begin position="493"/>
        <end position="508"/>
    </location>
</feature>
<feature type="compositionally biased region" description="Low complexity" evidence="4">
    <location>
        <begin position="529"/>
        <end position="554"/>
    </location>
</feature>
<feature type="compositionally biased region" description="Polar residues" evidence="4">
    <location>
        <begin position="654"/>
        <end position="675"/>
    </location>
</feature>
<feature type="compositionally biased region" description="Pro residues" evidence="4">
    <location>
        <begin position="1285"/>
        <end position="1326"/>
    </location>
</feature>
<feature type="compositionally biased region" description="Basic and acidic residues" evidence="4">
    <location>
        <begin position="1329"/>
        <end position="1345"/>
    </location>
</feature>
<feature type="compositionally biased region" description="Basic and acidic residues" evidence="4">
    <location>
        <begin position="1364"/>
        <end position="1376"/>
    </location>
</feature>
<feature type="binding site" evidence="2">
    <location>
        <position position="1143"/>
    </location>
    <ligand>
        <name>3',5'-cyclic GMP</name>
        <dbReference type="ChEBI" id="CHEBI:57746"/>
    </ligand>
</feature>
<feature type="binding site" evidence="2">
    <location>
        <position position="1144"/>
    </location>
    <ligand>
        <name>3',5'-cyclic GMP</name>
        <dbReference type="ChEBI" id="CHEBI:57746"/>
    </ligand>
</feature>
<feature type="binding site" evidence="2">
    <location>
        <position position="1146"/>
    </location>
    <ligand>
        <name>3',5'-cyclic GMP</name>
        <dbReference type="ChEBI" id="CHEBI:57746"/>
    </ligand>
</feature>
<feature type="binding site" evidence="2">
    <location>
        <position position="1156"/>
    </location>
    <ligand>
        <name>3',5'-cyclic AMP</name>
        <dbReference type="ChEBI" id="CHEBI:58165"/>
    </ligand>
</feature>
<feature type="binding site" evidence="2">
    <location>
        <position position="1156"/>
    </location>
    <ligand>
        <name>3',5'-cyclic GMP</name>
        <dbReference type="ChEBI" id="CHEBI:57746"/>
    </ligand>
</feature>
<feature type="binding site" evidence="2">
    <location>
        <position position="1157"/>
    </location>
    <ligand>
        <name>3',5'-cyclic GMP</name>
        <dbReference type="ChEBI" id="CHEBI:57746"/>
    </ligand>
</feature>
<feature type="site" description="Central gate" evidence="14">
    <location>
        <position position="986"/>
    </location>
</feature>
<feature type="site" description="Central gate" evidence="14">
    <location>
        <position position="990"/>
    </location>
</feature>
<feature type="site" description="Occludes the pore below the central gate" evidence="14">
    <location>
        <position position="994"/>
    </location>
</feature>
<feature type="splice variant" id="VSP_037919" description="In isoform CNG4C, isoform CNG4E and isoform CNG4D." evidence="12">
    <location>
        <begin position="1"/>
        <end position="456"/>
    </location>
</feature>
<feature type="splice variant" id="VSP_037910" description="In isoform GARP2." evidence="13">
    <original>ISILPGEQ</original>
    <variation>RVVAAGSL</variation>
    <location>
        <begin position="292"/>
        <end position="299"/>
    </location>
</feature>
<feature type="splice variant" id="VSP_037911" description="In isoform GARP2." evidence="13">
    <location>
        <begin position="300"/>
        <end position="1394"/>
    </location>
</feature>
<feature type="splice variant" id="VSP_037912" description="In isoform GARP1." evidence="10">
    <original>K</original>
    <variation>E</variation>
    <location>
        <position position="341"/>
    </location>
</feature>
<feature type="splice variant" id="VSP_037920" description="In isoform CNG4C, isoform CNG4E and isoform CNG4D." evidence="12">
    <original>EEDEEEEQD</original>
    <variation>MRAGQKGRC</variation>
    <location>
        <begin position="457"/>
        <end position="465"/>
    </location>
</feature>
<feature type="splice variant" id="VSP_037913" description="In isoform GARP1 and isoform CNG4C." evidence="10 12">
    <original>R</original>
    <variation>Q</variation>
    <location>
        <position position="482"/>
    </location>
</feature>
<feature type="splice variant" id="VSP_037914" description="In isoform GARP1." evidence="10">
    <original>A</original>
    <variation>T</variation>
    <location>
        <position position="499"/>
    </location>
</feature>
<feature type="splice variant" id="VSP_037915" description="In isoform CNG4E." evidence="13">
    <location>
        <begin position="515"/>
        <end position="532"/>
    </location>
</feature>
<feature type="splice variant" id="VSP_037916" description="In isoform CNG4D." evidence="13">
    <location>
        <begin position="522"/>
        <end position="530"/>
    </location>
</feature>
<feature type="splice variant" id="VSP_037917" description="In isoform GARP1." evidence="10">
    <original>VPATEEHPELQVEDADADS</original>
    <variation>GSFQMSPFEALQECEALKR</variation>
    <location>
        <begin position="572"/>
        <end position="590"/>
    </location>
</feature>
<feature type="splice variant" id="VSP_037918" description="In isoform GARP1." evidence="10">
    <location>
        <begin position="591"/>
        <end position="1394"/>
    </location>
</feature>
<feature type="sequence conflict" description="In Ref. 2; CAA64367." evidence="13" ref="2">
    <original>S</original>
    <variation>A</variation>
    <location>
        <position position="1283"/>
    </location>
</feature>
<feature type="sequence conflict" description="In Ref. 2; CAA64367." evidence="13" ref="2">
    <original>R</original>
    <variation>A</variation>
    <location>
        <position position="1289"/>
    </location>
</feature>
<feature type="sequence conflict" description="In Ref. 2; CAA64367." evidence="13" ref="2">
    <original>D</original>
    <variation>E</variation>
    <location>
        <position position="1336"/>
    </location>
</feature>
<feature type="sequence conflict" description="In Ref. 2; CAA64367." evidence="13" ref="2">
    <original>A</original>
    <variation>AA</variation>
    <location>
        <position position="1338"/>
    </location>
</feature>
<feature type="strand" evidence="17">
    <location>
        <begin position="764"/>
        <end position="766"/>
    </location>
</feature>
<feature type="helix" evidence="17">
    <location>
        <begin position="770"/>
        <end position="793"/>
    </location>
</feature>
<feature type="helix" evidence="16">
    <location>
        <begin position="795"/>
        <end position="797"/>
    </location>
</feature>
<feature type="helix" evidence="17">
    <location>
        <begin position="799"/>
        <end position="818"/>
    </location>
</feature>
<feature type="turn" evidence="17">
    <location>
        <begin position="822"/>
        <end position="825"/>
    </location>
</feature>
<feature type="strand" evidence="17">
    <location>
        <begin position="829"/>
        <end position="831"/>
    </location>
</feature>
<feature type="strand" evidence="17">
    <location>
        <begin position="834"/>
        <end position="836"/>
    </location>
</feature>
<feature type="strand" evidence="17">
    <location>
        <begin position="838"/>
        <end position="840"/>
    </location>
</feature>
<feature type="helix" evidence="17">
    <location>
        <begin position="842"/>
        <end position="847"/>
    </location>
</feature>
<feature type="helix" evidence="17">
    <location>
        <begin position="850"/>
        <end position="854"/>
    </location>
</feature>
<feature type="strand" evidence="17">
    <location>
        <begin position="855"/>
        <end position="860"/>
    </location>
</feature>
<feature type="helix" evidence="17">
    <location>
        <begin position="873"/>
        <end position="876"/>
    </location>
</feature>
<feature type="helix" evidence="17">
    <location>
        <begin position="883"/>
        <end position="896"/>
    </location>
</feature>
<feature type="helix" evidence="17">
    <location>
        <begin position="901"/>
        <end position="930"/>
    </location>
</feature>
<feature type="strand" evidence="17">
    <location>
        <begin position="934"/>
        <end position="937"/>
    </location>
</feature>
<feature type="helix" evidence="17">
    <location>
        <begin position="945"/>
        <end position="956"/>
    </location>
</feature>
<feature type="turn" evidence="17">
    <location>
        <begin position="969"/>
        <end position="971"/>
    </location>
</feature>
<feature type="helix" evidence="17">
    <location>
        <begin position="972"/>
        <end position="1020"/>
    </location>
</feature>
<feature type="helix" evidence="17">
    <location>
        <begin position="1025"/>
        <end position="1039"/>
    </location>
</feature>
<feature type="turn" evidence="17">
    <location>
        <begin position="1040"/>
        <end position="1042"/>
    </location>
</feature>
<feature type="strand" evidence="17">
    <location>
        <begin position="1043"/>
        <end position="1045"/>
    </location>
</feature>
<feature type="helix" evidence="17">
    <location>
        <begin position="1048"/>
        <end position="1052"/>
    </location>
</feature>
<feature type="helix" evidence="17">
    <location>
        <begin position="1056"/>
        <end position="1066"/>
    </location>
</feature>
<feature type="helix" evidence="17">
    <location>
        <begin position="1068"/>
        <end position="1072"/>
    </location>
</feature>
<feature type="turn" evidence="17">
    <location>
        <begin position="1076"/>
        <end position="1079"/>
    </location>
</feature>
<feature type="helix" evidence="17">
    <location>
        <begin position="1082"/>
        <end position="1090"/>
    </location>
</feature>
<feature type="strand" evidence="17">
    <location>
        <begin position="1093"/>
        <end position="1097"/>
    </location>
</feature>
<feature type="strand" evidence="17">
    <location>
        <begin position="1101"/>
        <end position="1104"/>
    </location>
</feature>
<feature type="strand" evidence="17">
    <location>
        <begin position="1114"/>
        <end position="1119"/>
    </location>
</feature>
<feature type="strand" evidence="17">
    <location>
        <begin position="1121"/>
        <end position="1129"/>
    </location>
</feature>
<feature type="strand" evidence="17">
    <location>
        <begin position="1131"/>
        <end position="1136"/>
    </location>
</feature>
<feature type="helix" evidence="17">
    <location>
        <begin position="1144"/>
        <end position="1148"/>
    </location>
</feature>
<feature type="helix" evidence="16">
    <location>
        <begin position="1152"/>
        <end position="1154"/>
    </location>
</feature>
<feature type="strand" evidence="17">
    <location>
        <begin position="1158"/>
        <end position="1170"/>
    </location>
</feature>
<feature type="helix" evidence="17">
    <location>
        <begin position="1173"/>
        <end position="1181"/>
    </location>
</feature>
<feature type="helix" evidence="17">
    <location>
        <begin position="1184"/>
        <end position="1202"/>
    </location>
</feature>
<feature type="strand" evidence="16">
    <location>
        <begin position="1207"/>
        <end position="1211"/>
    </location>
</feature>
<feature type="helix" evidence="16">
    <location>
        <begin position="1212"/>
        <end position="1215"/>
    </location>
</feature>
<feature type="helix" evidence="16">
    <location>
        <begin position="1218"/>
        <end position="1224"/>
    </location>
</feature>
<feature type="helix" evidence="17">
    <location>
        <begin position="1238"/>
        <end position="1264"/>
    </location>
</feature>
<gene>
    <name evidence="9 11" type="primary">CNGB1</name>
    <name type="synonym">CNCG4</name>
</gene>
<organism>
    <name type="scientific">Bos taurus</name>
    <name type="common">Bovine</name>
    <dbReference type="NCBI Taxonomy" id="9913"/>
    <lineage>
        <taxon>Eukaryota</taxon>
        <taxon>Metazoa</taxon>
        <taxon>Chordata</taxon>
        <taxon>Craniata</taxon>
        <taxon>Vertebrata</taxon>
        <taxon>Euteleostomi</taxon>
        <taxon>Mammalia</taxon>
        <taxon>Eutheria</taxon>
        <taxon>Laurasiatheria</taxon>
        <taxon>Artiodactyla</taxon>
        <taxon>Ruminantia</taxon>
        <taxon>Pecora</taxon>
        <taxon>Bovidae</taxon>
        <taxon>Bovinae</taxon>
        <taxon>Bos</taxon>
    </lineage>
</organism>
<accession>Q28181</accession>
<accession>Q03861</accession>
<accession>Q28082</accession>